<dbReference type="EC" id="3.5.1.5" evidence="1"/>
<dbReference type="EMBL" id="X78411">
    <property type="protein sequence ID" value="CAA55173.1"/>
    <property type="molecule type" value="Genomic_DNA"/>
</dbReference>
<dbReference type="PIR" id="S47102">
    <property type="entry name" value="S47102"/>
</dbReference>
<dbReference type="PDB" id="1IE7">
    <property type="method" value="X-ray"/>
    <property type="resolution" value="1.85 A"/>
    <property type="chains" value="A=1-100"/>
</dbReference>
<dbReference type="PDB" id="1S3T">
    <property type="method" value="X-ray"/>
    <property type="resolution" value="2.10 A"/>
    <property type="chains" value="A=1-100"/>
</dbReference>
<dbReference type="PDB" id="1UBP">
    <property type="method" value="X-ray"/>
    <property type="resolution" value="1.65 A"/>
    <property type="chains" value="A=1-100"/>
</dbReference>
<dbReference type="PDB" id="2UBP">
    <property type="method" value="X-ray"/>
    <property type="resolution" value="2.00 A"/>
    <property type="chains" value="A=1-100"/>
</dbReference>
<dbReference type="PDB" id="3UBP">
    <property type="method" value="X-ray"/>
    <property type="resolution" value="2.00 A"/>
    <property type="chains" value="A=1-100"/>
</dbReference>
<dbReference type="PDB" id="4AC7">
    <property type="method" value="X-ray"/>
    <property type="resolution" value="1.50 A"/>
    <property type="chains" value="A=1-100"/>
</dbReference>
<dbReference type="PDB" id="4CEU">
    <property type="method" value="X-ray"/>
    <property type="resolution" value="1.58 A"/>
    <property type="chains" value="A=1-100"/>
</dbReference>
<dbReference type="PDB" id="4CEX">
    <property type="method" value="X-ray"/>
    <property type="resolution" value="1.59 A"/>
    <property type="chains" value="A=1-100"/>
</dbReference>
<dbReference type="PDB" id="4UBP">
    <property type="method" value="X-ray"/>
    <property type="resolution" value="1.55 A"/>
    <property type="chains" value="A=1-100"/>
</dbReference>
<dbReference type="PDB" id="5A6T">
    <property type="method" value="X-ray"/>
    <property type="resolution" value="1.65 A"/>
    <property type="chains" value="A=1-100"/>
</dbReference>
<dbReference type="PDB" id="5FSD">
    <property type="method" value="X-ray"/>
    <property type="resolution" value="1.75 A"/>
    <property type="chains" value="A=1-100"/>
</dbReference>
<dbReference type="PDB" id="5FSE">
    <property type="method" value="X-ray"/>
    <property type="resolution" value="2.07 A"/>
    <property type="chains" value="A=1-100"/>
</dbReference>
<dbReference type="PDB" id="5G4H">
    <property type="method" value="X-ray"/>
    <property type="resolution" value="1.50 A"/>
    <property type="chains" value="A=1-100"/>
</dbReference>
<dbReference type="PDB" id="5OL4">
    <property type="method" value="X-ray"/>
    <property type="resolution" value="1.28 A"/>
    <property type="chains" value="A=1-100"/>
</dbReference>
<dbReference type="PDB" id="6H8J">
    <property type="method" value="X-ray"/>
    <property type="resolution" value="1.45 A"/>
    <property type="chains" value="A=1-100"/>
</dbReference>
<dbReference type="PDB" id="6QDY">
    <property type="method" value="X-ray"/>
    <property type="resolution" value="1.42 A"/>
    <property type="chains" value="A=1-100"/>
</dbReference>
<dbReference type="PDB" id="6RKG">
    <property type="method" value="X-ray"/>
    <property type="resolution" value="1.32 A"/>
    <property type="chains" value="A=1-100"/>
</dbReference>
<dbReference type="PDB" id="6RP1">
    <property type="method" value="X-ray"/>
    <property type="resolution" value="1.49 A"/>
    <property type="chains" value="A=1-100"/>
</dbReference>
<dbReference type="PDB" id="7B58">
    <property type="method" value="X-ray"/>
    <property type="resolution" value="1.72 A"/>
    <property type="chains" value="AAA=1-100"/>
</dbReference>
<dbReference type="PDB" id="7B59">
    <property type="method" value="X-ray"/>
    <property type="resolution" value="1.63 A"/>
    <property type="chains" value="AAA=1-100"/>
</dbReference>
<dbReference type="PDB" id="7B5A">
    <property type="method" value="X-ray"/>
    <property type="resolution" value="1.97 A"/>
    <property type="chains" value="AAA=1-100"/>
</dbReference>
<dbReference type="PDB" id="7P7N">
    <property type="method" value="X-ray"/>
    <property type="resolution" value="1.80 A"/>
    <property type="chains" value="AAA=1-100"/>
</dbReference>
<dbReference type="PDB" id="7P7O">
    <property type="method" value="X-ray"/>
    <property type="resolution" value="1.87 A"/>
    <property type="chains" value="AAA=1-100"/>
</dbReference>
<dbReference type="PDB" id="7ZCY">
    <property type="method" value="X-ray"/>
    <property type="resolution" value="1.54 A"/>
    <property type="chains" value="A=1-100"/>
</dbReference>
<dbReference type="PDB" id="8A18">
    <property type="method" value="X-ray"/>
    <property type="resolution" value="1.63 A"/>
    <property type="chains" value="AAA=1-100"/>
</dbReference>
<dbReference type="PDB" id="8Q2E">
    <property type="method" value="X-ray"/>
    <property type="resolution" value="1.68 A"/>
    <property type="chains" value="A=1-100"/>
</dbReference>
<dbReference type="PDBsum" id="1IE7"/>
<dbReference type="PDBsum" id="1S3T"/>
<dbReference type="PDBsum" id="1UBP"/>
<dbReference type="PDBsum" id="2UBP"/>
<dbReference type="PDBsum" id="3UBP"/>
<dbReference type="PDBsum" id="4AC7"/>
<dbReference type="PDBsum" id="4CEU"/>
<dbReference type="PDBsum" id="4CEX"/>
<dbReference type="PDBsum" id="4UBP"/>
<dbReference type="PDBsum" id="5A6T"/>
<dbReference type="PDBsum" id="5FSD"/>
<dbReference type="PDBsum" id="5FSE"/>
<dbReference type="PDBsum" id="5G4H"/>
<dbReference type="PDBsum" id="5OL4"/>
<dbReference type="PDBsum" id="6H8J"/>
<dbReference type="PDBsum" id="6QDY"/>
<dbReference type="PDBsum" id="6RKG"/>
<dbReference type="PDBsum" id="6RP1"/>
<dbReference type="PDBsum" id="7B58"/>
<dbReference type="PDBsum" id="7B59"/>
<dbReference type="PDBsum" id="7B5A"/>
<dbReference type="PDBsum" id="7P7N"/>
<dbReference type="PDBsum" id="7P7O"/>
<dbReference type="PDBsum" id="7ZCY"/>
<dbReference type="PDBsum" id="8A18"/>
<dbReference type="PDBsum" id="8Q2E"/>
<dbReference type="SMR" id="P41022"/>
<dbReference type="BindingDB" id="P41022"/>
<dbReference type="DrugBank" id="DB02899">
    <property type="generic name" value="N-Carboxymethionine"/>
</dbReference>
<dbReference type="BRENDA" id="3.5.1.5">
    <property type="organism ID" value="682"/>
</dbReference>
<dbReference type="UniPathway" id="UPA00258">
    <property type="reaction ID" value="UER00370"/>
</dbReference>
<dbReference type="EvolutionaryTrace" id="P41022"/>
<dbReference type="GO" id="GO:0005737">
    <property type="term" value="C:cytoplasm"/>
    <property type="evidence" value="ECO:0007669"/>
    <property type="project" value="UniProtKB-SubCell"/>
</dbReference>
<dbReference type="GO" id="GO:0016151">
    <property type="term" value="F:nickel cation binding"/>
    <property type="evidence" value="ECO:0007669"/>
    <property type="project" value="InterPro"/>
</dbReference>
<dbReference type="GO" id="GO:0009039">
    <property type="term" value="F:urease activity"/>
    <property type="evidence" value="ECO:0007669"/>
    <property type="project" value="UniProtKB-UniRule"/>
</dbReference>
<dbReference type="GO" id="GO:0043419">
    <property type="term" value="P:urea catabolic process"/>
    <property type="evidence" value="ECO:0007669"/>
    <property type="project" value="UniProtKB-UniRule"/>
</dbReference>
<dbReference type="CDD" id="cd00390">
    <property type="entry name" value="Urease_gamma"/>
    <property type="match status" value="1"/>
</dbReference>
<dbReference type="Gene3D" id="3.30.280.10">
    <property type="entry name" value="Urease, gamma-like subunit"/>
    <property type="match status" value="1"/>
</dbReference>
<dbReference type="HAMAP" id="MF_00739">
    <property type="entry name" value="Urease_gamma"/>
    <property type="match status" value="1"/>
</dbReference>
<dbReference type="InterPro" id="IPR012010">
    <property type="entry name" value="Urease_gamma"/>
</dbReference>
<dbReference type="InterPro" id="IPR002026">
    <property type="entry name" value="Urease_gamma/gamma-beta_su"/>
</dbReference>
<dbReference type="InterPro" id="IPR036463">
    <property type="entry name" value="Urease_gamma_sf"/>
</dbReference>
<dbReference type="InterPro" id="IPR050069">
    <property type="entry name" value="Urease_subunit"/>
</dbReference>
<dbReference type="NCBIfam" id="NF009712">
    <property type="entry name" value="PRK13241.1"/>
    <property type="match status" value="1"/>
</dbReference>
<dbReference type="NCBIfam" id="TIGR00193">
    <property type="entry name" value="urease_gam"/>
    <property type="match status" value="1"/>
</dbReference>
<dbReference type="PANTHER" id="PTHR33569">
    <property type="entry name" value="UREASE"/>
    <property type="match status" value="1"/>
</dbReference>
<dbReference type="PANTHER" id="PTHR33569:SF1">
    <property type="entry name" value="UREASE"/>
    <property type="match status" value="1"/>
</dbReference>
<dbReference type="Pfam" id="PF00547">
    <property type="entry name" value="Urease_gamma"/>
    <property type="match status" value="1"/>
</dbReference>
<dbReference type="PIRSF" id="PIRSF001223">
    <property type="entry name" value="Urease_gamma"/>
    <property type="match status" value="1"/>
</dbReference>
<dbReference type="SUPFAM" id="SSF54111">
    <property type="entry name" value="Urease, gamma-subunit"/>
    <property type="match status" value="1"/>
</dbReference>
<evidence type="ECO:0000255" key="1">
    <source>
        <dbReference type="HAMAP-Rule" id="MF_00739"/>
    </source>
</evidence>
<evidence type="ECO:0000269" key="2">
    <source>
    </source>
</evidence>
<evidence type="ECO:0000269" key="3">
    <source>
    </source>
</evidence>
<evidence type="ECO:0000269" key="4">
    <source>
    </source>
</evidence>
<evidence type="ECO:0000269" key="5">
    <source>
    </source>
</evidence>
<evidence type="ECO:0000269" key="6">
    <source>
    </source>
</evidence>
<evidence type="ECO:0007829" key="7">
    <source>
        <dbReference type="PDB" id="5OL4"/>
    </source>
</evidence>
<feature type="chain" id="PRO_0000097991" description="Urease subunit gamma">
    <location>
        <begin position="1"/>
        <end position="100"/>
    </location>
</feature>
<feature type="helix" evidence="7">
    <location>
        <begin position="5"/>
        <end position="25"/>
    </location>
</feature>
<feature type="helix" evidence="7">
    <location>
        <begin position="32"/>
        <end position="48"/>
    </location>
</feature>
<feature type="helix" evidence="7">
    <location>
        <begin position="53"/>
        <end position="59"/>
    </location>
</feature>
<feature type="helix" evidence="7">
    <location>
        <begin position="60"/>
        <end position="62"/>
    </location>
</feature>
<feature type="helix" evidence="7">
    <location>
        <begin position="66"/>
        <end position="68"/>
    </location>
</feature>
<feature type="helix" evidence="7">
    <location>
        <begin position="73"/>
        <end position="76"/>
    </location>
</feature>
<feature type="strand" evidence="7">
    <location>
        <begin position="78"/>
        <end position="86"/>
    </location>
</feature>
<feature type="strand" evidence="7">
    <location>
        <begin position="89"/>
        <end position="97"/>
    </location>
</feature>
<comment type="catalytic activity">
    <reaction evidence="1">
        <text>urea + 2 H2O + H(+) = hydrogencarbonate + 2 NH4(+)</text>
        <dbReference type="Rhea" id="RHEA:20557"/>
        <dbReference type="ChEBI" id="CHEBI:15377"/>
        <dbReference type="ChEBI" id="CHEBI:15378"/>
        <dbReference type="ChEBI" id="CHEBI:16199"/>
        <dbReference type="ChEBI" id="CHEBI:17544"/>
        <dbReference type="ChEBI" id="CHEBI:28938"/>
        <dbReference type="EC" id="3.5.1.5"/>
    </reaction>
</comment>
<comment type="pathway">
    <text evidence="1">Nitrogen metabolism; urea degradation; CO(2) and NH(3) from urea (urease route): step 1/1.</text>
</comment>
<comment type="subunit">
    <text evidence="1 2 3 4 5 6">Heterotrimer of UreA (gamma), UreB (beta) and UreC (alpha) subunits. Three heterotrimers associate to form the active enzyme.</text>
</comment>
<comment type="subcellular location">
    <subcellularLocation>
        <location evidence="1">Cytoplasm</location>
    </subcellularLocation>
</comment>
<comment type="PTM">
    <text>Although not discussed in the published references, Met-1 is represented in the submitted PDB entries as being modified by either a formyl, a carboxyl, or an acetyl group. The N-terminal is probably N-(dihydroxymethyl)methionine, the hydrated form of N-formylmethionine.</text>
</comment>
<comment type="similarity">
    <text evidence="1">Belongs to the urease gamma subunit family.</text>
</comment>
<keyword id="KW-0002">3D-structure</keyword>
<keyword id="KW-0963">Cytoplasm</keyword>
<keyword id="KW-0291">Formylation</keyword>
<keyword id="KW-0378">Hydrolase</keyword>
<organism>
    <name type="scientific">Sporosarcina pasteurii</name>
    <name type="common">Bacillus pasteurii</name>
    <dbReference type="NCBI Taxonomy" id="1474"/>
    <lineage>
        <taxon>Bacteria</taxon>
        <taxon>Bacillati</taxon>
        <taxon>Bacillota</taxon>
        <taxon>Bacilli</taxon>
        <taxon>Bacillales</taxon>
        <taxon>Caryophanaceae</taxon>
        <taxon>Sporosarcina</taxon>
    </lineage>
</organism>
<gene>
    <name evidence="1" type="primary">ureA</name>
</gene>
<name>URE3_SPOPA</name>
<accession>P41022</accession>
<reference key="1">
    <citation type="submission" date="1994-06" db="EMBL/GenBank/DDBJ databases">
        <title>Nucleotide sequence of three genes on a urease encoding DNA-fragment from Bacillus pasteurii.</title>
        <authorList>
            <person name="Moersdorf G."/>
            <person name="Weinmann P."/>
            <person name="Kaltwasser H."/>
        </authorList>
    </citation>
    <scope>NUCLEOTIDE SEQUENCE [GENOMIC DNA]</scope>
    <source>
        <strain>ATCC 11859 / DSM 33 / NCIB 8841 / NCTC 4822</strain>
    </source>
</reference>
<reference key="2">
    <citation type="journal article" date="1998" name="Acta Crystallogr. D">
        <title>Crystallization and preliminary high-resolution X-ray diffraction analysis of native and beta-mercaptoethanol-inhibited urease from Bacillus pasteurii.</title>
        <authorList>
            <person name="Benini S."/>
            <person name="Ciurli S."/>
            <person name="Rypniewski W.R."/>
            <person name="Wilson K.S."/>
            <person name="Mangani S."/>
        </authorList>
    </citation>
    <scope>X-RAY CRYSTALLOGRAPHY (1.65 ANGSTROMS) IN COMPLEX WITH UREB; UREC AND BETA-MERCAPTOETHANOL</scope>
</reference>
<reference key="3">
    <citation type="journal article" date="1999" name="Structure">
        <title>A new proposal for urease mechanism based on the crystal structures of the native and inhibited enzyme from Bacillus pasteurii: why urea hydrolysis costs two nickels.</title>
        <authorList>
            <person name="Benini S."/>
            <person name="Rypniewski W.R."/>
            <person name="Wilson K.S."/>
            <person name="Miletti S."/>
            <person name="Ciurli S."/>
            <person name="Mangani S."/>
        </authorList>
    </citation>
    <scope>X-RAY CRYSTALLOGRAPHY (2.0 ANGSTROMS) IN COMPLEX WITH UREB; UREC AND DIAMIDOPHOSPHATE</scope>
</reference>
<reference key="4">
    <citation type="journal article" date="2000" name="J. Biol. Inorg. Chem.">
        <title>The complex of Bacillus pasteurii urease with acetohydroxamate anion from X-ray data at 1.55 A resolution.</title>
        <authorList>
            <person name="Benini S."/>
            <person name="Rypniewski W.R."/>
            <person name="Wilson K.S."/>
            <person name="Miletti S."/>
            <person name="Ciurli S."/>
            <person name="Mangani S."/>
        </authorList>
    </citation>
    <scope>X-RAY CRYSTALLOGRAPHY (1.55 ANGSTROMS) IN COMPLEX WITH UREB; UREC AND ACETOHYDROXAMIC ACID</scope>
</reference>
<reference key="5">
    <citation type="journal article" date="2001" name="J. Biol. Inorg. Chem.">
        <title>Structure-based rationalization of urease inhibition by phosphate: novel insights into the enzyme mechanism.</title>
        <authorList>
            <person name="Benini S."/>
            <person name="Rypniewski W.R."/>
            <person name="Wilson K.S."/>
            <person name="Ciurli S."/>
            <person name="Mangani S."/>
        </authorList>
    </citation>
    <scope>X-RAY CRYSTALLOGRAPHY (1.85 ANGSTROMS) IN COMPLEX WITH UREB; UREC AND PHOSPHATE</scope>
</reference>
<reference key="6">
    <citation type="journal article" date="2004" name="J. Am. Chem. Soc.">
        <title>Molecular details of urease inhibition by boric acid: insights into the catalytic mechanism.</title>
        <authorList>
            <person name="Benini S."/>
            <person name="Rypniewski W.R."/>
            <person name="Wilson K.S."/>
            <person name="Mangani S."/>
            <person name="Ciurli S."/>
        </authorList>
    </citation>
    <scope>X-RAY CRYSTALLOGRAPHY (2.1 ANGSTROMS) IN COMPLEX WITH UREB; UREC AND BORATE IONS</scope>
</reference>
<protein>
    <recommendedName>
        <fullName evidence="1">Urease subunit gamma</fullName>
        <ecNumber evidence="1">3.5.1.5</ecNumber>
    </recommendedName>
    <alternativeName>
        <fullName evidence="1">Urea amidohydrolase subunit gamma</fullName>
    </alternativeName>
</protein>
<proteinExistence type="evidence at protein level"/>
<sequence length="100" mass="11146">MHLNPAEKEKLQIFLASELLLRRKARGLKLNYPEAVAIITSFIMEGARDGKTVAMLMEEGKHVLTRDDVMEGVPEMIDDIQAEATFPDGTKLVTVHNPIS</sequence>